<protein>
    <recommendedName>
        <fullName>Probable ABC transporter permease protein HI_0355</fullName>
    </recommendedName>
</protein>
<sequence length="245" mass="27098">MKIRLLKPLLIVGVLLMIWQMVATLGSFPHYIFPSPQAVRQQLFTHAELLWQHTQVTLLEICLGLLLGFLFGLISALLLSFSRQISAVLLPILVISQAIPVFAIAPLLVLWFGYGMASKIVMSVLIIYFPVTAACYDGLRNTPQAWLDLAKTFNISPLRLLLKVRLPAALPAFASGLRIAVSVAPIGAVVGEWVGSSEGLGYLMIHANARMQVDLMFAALLILVSISLCLYFSIDWLLHRFIWSV</sequence>
<reference key="1">
    <citation type="journal article" date="1995" name="Science">
        <title>Whole-genome random sequencing and assembly of Haemophilus influenzae Rd.</title>
        <authorList>
            <person name="Fleischmann R.D."/>
            <person name="Adams M.D."/>
            <person name="White O."/>
            <person name="Clayton R.A."/>
            <person name="Kirkness E.F."/>
            <person name="Kerlavage A.R."/>
            <person name="Bult C.J."/>
            <person name="Tomb J.-F."/>
            <person name="Dougherty B.A."/>
            <person name="Merrick J.M."/>
            <person name="McKenney K."/>
            <person name="Sutton G.G."/>
            <person name="FitzHugh W."/>
            <person name="Fields C.A."/>
            <person name="Gocayne J.D."/>
            <person name="Scott J.D."/>
            <person name="Shirley R."/>
            <person name="Liu L.-I."/>
            <person name="Glodek A."/>
            <person name="Kelley J.M."/>
            <person name="Weidman J.F."/>
            <person name="Phillips C.A."/>
            <person name="Spriggs T."/>
            <person name="Hedblom E."/>
            <person name="Cotton M.D."/>
            <person name="Utterback T.R."/>
            <person name="Hanna M.C."/>
            <person name="Nguyen D.T."/>
            <person name="Saudek D.M."/>
            <person name="Brandon R.C."/>
            <person name="Fine L.D."/>
            <person name="Fritchman J.L."/>
            <person name="Fuhrmann J.L."/>
            <person name="Geoghagen N.S.M."/>
            <person name="Gnehm C.L."/>
            <person name="McDonald L.A."/>
            <person name="Small K.V."/>
            <person name="Fraser C.M."/>
            <person name="Smith H.O."/>
            <person name="Venter J.C."/>
        </authorList>
    </citation>
    <scope>NUCLEOTIDE SEQUENCE [LARGE SCALE GENOMIC DNA]</scope>
    <source>
        <strain>ATCC 51907 / DSM 11121 / KW20 / Rd</strain>
    </source>
</reference>
<organism>
    <name type="scientific">Haemophilus influenzae (strain ATCC 51907 / DSM 11121 / KW20 / Rd)</name>
    <dbReference type="NCBI Taxonomy" id="71421"/>
    <lineage>
        <taxon>Bacteria</taxon>
        <taxon>Pseudomonadati</taxon>
        <taxon>Pseudomonadota</taxon>
        <taxon>Gammaproteobacteria</taxon>
        <taxon>Pasteurellales</taxon>
        <taxon>Pasteurellaceae</taxon>
        <taxon>Haemophilus</taxon>
    </lineage>
</organism>
<feature type="chain" id="PRO_0000060279" description="Probable ABC transporter permease protein HI_0355">
    <location>
        <begin position="1"/>
        <end position="245"/>
    </location>
</feature>
<feature type="transmembrane region" description="Helical" evidence="1">
    <location>
        <begin position="9"/>
        <end position="29"/>
    </location>
</feature>
<feature type="transmembrane region" description="Helical" evidence="1">
    <location>
        <begin position="61"/>
        <end position="81"/>
    </location>
</feature>
<feature type="transmembrane region" description="Helical" evidence="1">
    <location>
        <begin position="92"/>
        <end position="112"/>
    </location>
</feature>
<feature type="transmembrane region" description="Helical" evidence="1">
    <location>
        <begin position="115"/>
        <end position="135"/>
    </location>
</feature>
<feature type="transmembrane region" description="Helical" evidence="1">
    <location>
        <begin position="170"/>
        <end position="190"/>
    </location>
</feature>
<feature type="transmembrane region" description="Helical" evidence="1">
    <location>
        <begin position="217"/>
        <end position="237"/>
    </location>
</feature>
<feature type="domain" description="ABC transmembrane type-1" evidence="1">
    <location>
        <begin position="50"/>
        <end position="234"/>
    </location>
</feature>
<gene>
    <name type="ordered locus">HI_0355</name>
</gene>
<name>Y355_HAEIN</name>
<evidence type="ECO:0000255" key="1">
    <source>
        <dbReference type="PROSITE-ProRule" id="PRU00441"/>
    </source>
</evidence>
<evidence type="ECO:0000305" key="2"/>
<proteinExistence type="inferred from homology"/>
<dbReference type="EMBL" id="L42023">
    <property type="protein sequence ID" value="AAC22015.1"/>
    <property type="molecule type" value="Genomic_DNA"/>
</dbReference>
<dbReference type="RefSeq" id="NP_438518.1">
    <property type="nucleotide sequence ID" value="NC_000907.1"/>
</dbReference>
<dbReference type="SMR" id="Q57306"/>
<dbReference type="STRING" id="71421.HI_0355"/>
<dbReference type="TCDB" id="3.A.1.17.3">
    <property type="family name" value="the atp-binding cassette (abc) superfamily"/>
</dbReference>
<dbReference type="EnsemblBacteria" id="AAC22015">
    <property type="protein sequence ID" value="AAC22015"/>
    <property type="gene ID" value="HI_0355"/>
</dbReference>
<dbReference type="KEGG" id="hin:HI_0355"/>
<dbReference type="PATRIC" id="fig|71421.8.peg.374"/>
<dbReference type="eggNOG" id="COG0600">
    <property type="taxonomic scope" value="Bacteria"/>
</dbReference>
<dbReference type="HOGENOM" id="CLU_046113_2_1_6"/>
<dbReference type="OrthoDB" id="5298727at2"/>
<dbReference type="PhylomeDB" id="Q57306"/>
<dbReference type="BioCyc" id="HINF71421:G1GJ1-370-MONOMER"/>
<dbReference type="Proteomes" id="UP000000579">
    <property type="component" value="Chromosome"/>
</dbReference>
<dbReference type="GO" id="GO:0005886">
    <property type="term" value="C:plasma membrane"/>
    <property type="evidence" value="ECO:0000318"/>
    <property type="project" value="GO_Central"/>
</dbReference>
<dbReference type="GO" id="GO:0055085">
    <property type="term" value="P:transmembrane transport"/>
    <property type="evidence" value="ECO:0007669"/>
    <property type="project" value="InterPro"/>
</dbReference>
<dbReference type="CDD" id="cd06261">
    <property type="entry name" value="TM_PBP2"/>
    <property type="match status" value="1"/>
</dbReference>
<dbReference type="FunFam" id="1.10.3720.10:FF:000172">
    <property type="entry name" value="ABC transporter, permease protein"/>
    <property type="match status" value="1"/>
</dbReference>
<dbReference type="Gene3D" id="1.10.3720.10">
    <property type="entry name" value="MetI-like"/>
    <property type="match status" value="1"/>
</dbReference>
<dbReference type="InterPro" id="IPR000515">
    <property type="entry name" value="MetI-like"/>
</dbReference>
<dbReference type="InterPro" id="IPR035906">
    <property type="entry name" value="MetI-like_sf"/>
</dbReference>
<dbReference type="PANTHER" id="PTHR30151:SF20">
    <property type="entry name" value="ABC TRANSPORTER PERMEASE PROTEIN HI_0355-RELATED"/>
    <property type="match status" value="1"/>
</dbReference>
<dbReference type="PANTHER" id="PTHR30151">
    <property type="entry name" value="ALKANE SULFONATE ABC TRANSPORTER-RELATED, MEMBRANE SUBUNIT"/>
    <property type="match status" value="1"/>
</dbReference>
<dbReference type="Pfam" id="PF00528">
    <property type="entry name" value="BPD_transp_1"/>
    <property type="match status" value="1"/>
</dbReference>
<dbReference type="SUPFAM" id="SSF161098">
    <property type="entry name" value="MetI-like"/>
    <property type="match status" value="1"/>
</dbReference>
<dbReference type="PROSITE" id="PS50928">
    <property type="entry name" value="ABC_TM1"/>
    <property type="match status" value="1"/>
</dbReference>
<comment type="function">
    <text>Probably part of a binding-protein-dependent transport system. Probably responsible for the translocation of the substrate across the membrane.</text>
</comment>
<comment type="subcellular location">
    <subcellularLocation>
        <location evidence="2">Cell inner membrane</location>
        <topology evidence="1">Multi-pass membrane protein</topology>
    </subcellularLocation>
</comment>
<comment type="similarity">
    <text evidence="2">Belongs to the binding-protein-dependent transport system permease family. CysTW subfamily.</text>
</comment>
<keyword id="KW-0997">Cell inner membrane</keyword>
<keyword id="KW-1003">Cell membrane</keyword>
<keyword id="KW-0472">Membrane</keyword>
<keyword id="KW-1185">Reference proteome</keyword>
<keyword id="KW-0812">Transmembrane</keyword>
<keyword id="KW-1133">Transmembrane helix</keyword>
<keyword id="KW-0813">Transport</keyword>
<accession>Q57306</accession>
<accession>O05017</accession>